<reference key="1">
    <citation type="journal article" date="2005" name="Nature">
        <title>The genome of the social amoeba Dictyostelium discoideum.</title>
        <authorList>
            <person name="Eichinger L."/>
            <person name="Pachebat J.A."/>
            <person name="Gloeckner G."/>
            <person name="Rajandream M.A."/>
            <person name="Sucgang R."/>
            <person name="Berriman M."/>
            <person name="Song J."/>
            <person name="Olsen R."/>
            <person name="Szafranski K."/>
            <person name="Xu Q."/>
            <person name="Tunggal B."/>
            <person name="Kummerfeld S."/>
            <person name="Madera M."/>
            <person name="Konfortov B.A."/>
            <person name="Rivero F."/>
            <person name="Bankier A.T."/>
            <person name="Lehmann R."/>
            <person name="Hamlin N."/>
            <person name="Davies R."/>
            <person name="Gaudet P."/>
            <person name="Fey P."/>
            <person name="Pilcher K."/>
            <person name="Chen G."/>
            <person name="Saunders D."/>
            <person name="Sodergren E.J."/>
            <person name="Davis P."/>
            <person name="Kerhornou A."/>
            <person name="Nie X."/>
            <person name="Hall N."/>
            <person name="Anjard C."/>
            <person name="Hemphill L."/>
            <person name="Bason N."/>
            <person name="Farbrother P."/>
            <person name="Desany B."/>
            <person name="Just E."/>
            <person name="Morio T."/>
            <person name="Rost R."/>
            <person name="Churcher C.M."/>
            <person name="Cooper J."/>
            <person name="Haydock S."/>
            <person name="van Driessche N."/>
            <person name="Cronin A."/>
            <person name="Goodhead I."/>
            <person name="Muzny D.M."/>
            <person name="Mourier T."/>
            <person name="Pain A."/>
            <person name="Lu M."/>
            <person name="Harper D."/>
            <person name="Lindsay R."/>
            <person name="Hauser H."/>
            <person name="James K.D."/>
            <person name="Quiles M."/>
            <person name="Madan Babu M."/>
            <person name="Saito T."/>
            <person name="Buchrieser C."/>
            <person name="Wardroper A."/>
            <person name="Felder M."/>
            <person name="Thangavelu M."/>
            <person name="Johnson D."/>
            <person name="Knights A."/>
            <person name="Loulseged H."/>
            <person name="Mungall K.L."/>
            <person name="Oliver K."/>
            <person name="Price C."/>
            <person name="Quail M.A."/>
            <person name="Urushihara H."/>
            <person name="Hernandez J."/>
            <person name="Rabbinowitsch E."/>
            <person name="Steffen D."/>
            <person name="Sanders M."/>
            <person name="Ma J."/>
            <person name="Kohara Y."/>
            <person name="Sharp S."/>
            <person name="Simmonds M.N."/>
            <person name="Spiegler S."/>
            <person name="Tivey A."/>
            <person name="Sugano S."/>
            <person name="White B."/>
            <person name="Walker D."/>
            <person name="Woodward J.R."/>
            <person name="Winckler T."/>
            <person name="Tanaka Y."/>
            <person name="Shaulsky G."/>
            <person name="Schleicher M."/>
            <person name="Weinstock G.M."/>
            <person name="Rosenthal A."/>
            <person name="Cox E.C."/>
            <person name="Chisholm R.L."/>
            <person name="Gibbs R.A."/>
            <person name="Loomis W.F."/>
            <person name="Platzer M."/>
            <person name="Kay R.R."/>
            <person name="Williams J.G."/>
            <person name="Dear P.H."/>
            <person name="Noegel A.A."/>
            <person name="Barrell B.G."/>
            <person name="Kuspa A."/>
        </authorList>
    </citation>
    <scope>NUCLEOTIDE SEQUENCE [LARGE SCALE GENOMIC DNA]</scope>
    <source>
        <strain>AX4</strain>
    </source>
</reference>
<organism>
    <name type="scientific">Dictyostelium discoideum</name>
    <name type="common">Social amoeba</name>
    <dbReference type="NCBI Taxonomy" id="44689"/>
    <lineage>
        <taxon>Eukaryota</taxon>
        <taxon>Amoebozoa</taxon>
        <taxon>Evosea</taxon>
        <taxon>Eumycetozoa</taxon>
        <taxon>Dictyostelia</taxon>
        <taxon>Dictyosteliales</taxon>
        <taxon>Dictyosteliaceae</taxon>
        <taxon>Dictyostelium</taxon>
    </lineage>
</organism>
<keyword id="KW-0256">Endoplasmic reticulum</keyword>
<keyword id="KW-0328">Glycosyltransferase</keyword>
<keyword id="KW-0337">GPI-anchor biosynthesis</keyword>
<keyword id="KW-0472">Membrane</keyword>
<keyword id="KW-1185">Reference proteome</keyword>
<keyword id="KW-0808">Transferase</keyword>
<keyword id="KW-0812">Transmembrane</keyword>
<keyword id="KW-1133">Transmembrane helix</keyword>
<evidence type="ECO:0000250" key="1"/>
<evidence type="ECO:0000255" key="2"/>
<evidence type="ECO:0000256" key="3">
    <source>
        <dbReference type="SAM" id="MobiDB-lite"/>
    </source>
</evidence>
<evidence type="ECO:0000305" key="4"/>
<gene>
    <name type="primary">pigC</name>
    <name type="ORF">DDB_G0286221</name>
</gene>
<sequence>MNDHHLNHRIINNINASSSSSSSSSPVQTNININSANNTNNNNNNNNNNNNNNNNNNNNIDNKWKKNLYEKQPYSDNYTDETFLIGLVQNANFIKYDFWTVVLDSFTVSQQITSVILFAIIFFHSLKHTLTLPFLVAMAGGFLVLGYIAIIIIDPSANFLSIRSSFLHIILLFGTVYGLSPVLRTLTNSFSDDTIWALTFILLLAHLFFHDYGYTNNESQKFSAPVSLNAAIFASVLLGSRLPSNIHVFVLISYAIETFALFPIFRHHLKRHSMELHVGLTVILCVTCSLLLLGMSKLLALIYIGIIGTITFVCPLWLIFIQKYKNEINGPWDEASVISQSGGEF</sequence>
<dbReference type="EC" id="2.4.1.198"/>
<dbReference type="EMBL" id="AAFI02000085">
    <property type="protein sequence ID" value="EAL64286.1"/>
    <property type="molecule type" value="Genomic_DNA"/>
</dbReference>
<dbReference type="RefSeq" id="XP_637791.1">
    <property type="nucleotide sequence ID" value="XM_632699.1"/>
</dbReference>
<dbReference type="FunCoup" id="Q54M40">
    <property type="interactions" value="325"/>
</dbReference>
<dbReference type="STRING" id="44689.Q54M40"/>
<dbReference type="PaxDb" id="44689-DDB0233342"/>
<dbReference type="EnsemblProtists" id="EAL64286">
    <property type="protein sequence ID" value="EAL64286"/>
    <property type="gene ID" value="DDB_G0286221"/>
</dbReference>
<dbReference type="GeneID" id="8625505"/>
<dbReference type="KEGG" id="ddi:DDB_G0286221"/>
<dbReference type="dictyBase" id="DDB_G0286221">
    <property type="gene designation" value="pigC"/>
</dbReference>
<dbReference type="VEuPathDB" id="AmoebaDB:DDB_G0286221"/>
<dbReference type="eggNOG" id="KOG3059">
    <property type="taxonomic scope" value="Eukaryota"/>
</dbReference>
<dbReference type="HOGENOM" id="CLU_024002_2_0_1"/>
<dbReference type="InParanoid" id="Q54M40"/>
<dbReference type="OMA" id="STSYHAF"/>
<dbReference type="PhylomeDB" id="Q54M40"/>
<dbReference type="UniPathway" id="UPA00196"/>
<dbReference type="PRO" id="PR:Q54M40"/>
<dbReference type="Proteomes" id="UP000002195">
    <property type="component" value="Chromosome 4"/>
</dbReference>
<dbReference type="GO" id="GO:0000506">
    <property type="term" value="C:glycosylphosphatidylinositol-N-acetylglucosaminyltransferase (GPI-GnT) complex"/>
    <property type="evidence" value="ECO:0000318"/>
    <property type="project" value="GO_Central"/>
</dbReference>
<dbReference type="GO" id="GO:0017176">
    <property type="term" value="F:phosphatidylinositol N-acetylglucosaminyltransferase activity"/>
    <property type="evidence" value="ECO:0007669"/>
    <property type="project" value="UniProtKB-EC"/>
</dbReference>
<dbReference type="GO" id="GO:0006506">
    <property type="term" value="P:GPI anchor biosynthetic process"/>
    <property type="evidence" value="ECO:0007669"/>
    <property type="project" value="UniProtKB-UniPathway"/>
</dbReference>
<dbReference type="InterPro" id="IPR009450">
    <property type="entry name" value="Plno_GlcNAc_GPI2"/>
</dbReference>
<dbReference type="PANTHER" id="PTHR12982">
    <property type="entry name" value="PHOSPHATIDYLINOSITOL GLYCAN, CLASS C"/>
    <property type="match status" value="1"/>
</dbReference>
<dbReference type="PANTHER" id="PTHR12982:SF0">
    <property type="entry name" value="PHOSPHATIDYLINOSITOL N-ACETYLGLUCOSAMINYLTRANSFERASE SUBUNIT C"/>
    <property type="match status" value="1"/>
</dbReference>
<dbReference type="Pfam" id="PF06432">
    <property type="entry name" value="GPI2"/>
    <property type="match status" value="1"/>
</dbReference>
<dbReference type="PIRSF" id="PIRSF016104">
    <property type="entry name" value="GPI2"/>
    <property type="match status" value="1"/>
</dbReference>
<proteinExistence type="inferred from homology"/>
<name>PIGC_DICDI</name>
<feature type="chain" id="PRO_0000365732" description="Putative phosphatidylinositol N-acetylglucosaminyltransferase subunit C">
    <location>
        <begin position="1"/>
        <end position="345"/>
    </location>
</feature>
<feature type="transmembrane region" description="Helical" evidence="2">
    <location>
        <begin position="106"/>
        <end position="126"/>
    </location>
</feature>
<feature type="transmembrane region" description="Helical" evidence="2">
    <location>
        <begin position="133"/>
        <end position="153"/>
    </location>
</feature>
<feature type="transmembrane region" description="Helical" evidence="2">
    <location>
        <begin position="159"/>
        <end position="179"/>
    </location>
</feature>
<feature type="transmembrane region" description="Helical" evidence="2">
    <location>
        <begin position="194"/>
        <end position="214"/>
    </location>
</feature>
<feature type="transmembrane region" description="Helical" evidence="2">
    <location>
        <begin position="222"/>
        <end position="242"/>
    </location>
</feature>
<feature type="transmembrane region" description="Helical" evidence="2">
    <location>
        <begin position="245"/>
        <end position="265"/>
    </location>
</feature>
<feature type="transmembrane region" description="Helical" evidence="2">
    <location>
        <begin position="276"/>
        <end position="296"/>
    </location>
</feature>
<feature type="transmembrane region" description="Helical" evidence="2">
    <location>
        <begin position="301"/>
        <end position="321"/>
    </location>
</feature>
<feature type="region of interest" description="Disordered" evidence="3">
    <location>
        <begin position="13"/>
        <end position="62"/>
    </location>
</feature>
<feature type="compositionally biased region" description="Low complexity" evidence="3">
    <location>
        <begin position="13"/>
        <end position="61"/>
    </location>
</feature>
<accession>Q54M40</accession>
<comment type="function">
    <text evidence="1">Part of the complex catalyzing the transfer of N-acetylglucosamine from UDP-N-acetylglucosamine to phosphatidylinositol, the first step of GPI biosynthesis.</text>
</comment>
<comment type="catalytic activity">
    <reaction>
        <text>a 1,2-diacyl-sn-glycero-3-phospho-(1D-myo-inositol) + UDP-N-acetyl-alpha-D-glucosamine = a 6-(N-acetyl-alpha-D-glucosaminyl)-1-(1,2-diacyl-sn-glycero-3-phospho)-1D-myo-inositol + UDP + H(+)</text>
        <dbReference type="Rhea" id="RHEA:14789"/>
        <dbReference type="ChEBI" id="CHEBI:15378"/>
        <dbReference type="ChEBI" id="CHEBI:57265"/>
        <dbReference type="ChEBI" id="CHEBI:57705"/>
        <dbReference type="ChEBI" id="CHEBI:57880"/>
        <dbReference type="ChEBI" id="CHEBI:58223"/>
        <dbReference type="EC" id="2.4.1.198"/>
    </reaction>
</comment>
<comment type="pathway">
    <text>Glycolipid biosynthesis; glycosylphosphatidylinositol-anchor biosynthesis.</text>
</comment>
<comment type="subunit">
    <text evidence="1">Component of the phosphatidylinositol N-acetylglucosaminyltransferase complex.</text>
</comment>
<comment type="subcellular location">
    <subcellularLocation>
        <location evidence="1">Endoplasmic reticulum membrane</location>
        <topology evidence="1">Multi-pass membrane protein</topology>
    </subcellularLocation>
</comment>
<comment type="similarity">
    <text evidence="4">Belongs to the PIGC family.</text>
</comment>
<protein>
    <recommendedName>
        <fullName>Putative phosphatidylinositol N-acetylglucosaminyltransferase subunit C</fullName>
        <ecNumber>2.4.1.198</ecNumber>
    </recommendedName>
    <alternativeName>
        <fullName>Phosphatidylinositol-glycan biosynthesis class C protein</fullName>
        <shortName>PIG-C</shortName>
    </alternativeName>
</protein>